<name>KPYK_CORGL</name>
<gene>
    <name type="primary">pyk</name>
    <name type="ordered locus">Cgl2089</name>
    <name type="ordered locus">cg2291</name>
</gene>
<reference key="1">
    <citation type="journal article" date="1994" name="Appl. Environ. Microbiol.">
        <title>Structural and functional analysis of pyruvate kinase from Corynebacterium glutamicum.</title>
        <authorList>
            <person name="Jetten M.S."/>
            <person name="Gubler M.E."/>
            <person name="Lee S.H."/>
            <person name="Sinskey A.J."/>
        </authorList>
    </citation>
    <scope>NUCLEOTIDE SEQUENCE [GENOMIC DNA]</scope>
    <scope>CHARACTERIZATION</scope>
    <source>
        <strain>ATCC 13059 / LMG 3658 / NCIB 10332 / AS019 / 613</strain>
    </source>
</reference>
<reference key="2">
    <citation type="journal article" date="2003" name="Appl. Microbiol. Biotechnol.">
        <title>The Corynebacterium glutamicum genome: features and impacts on biotechnological processes.</title>
        <authorList>
            <person name="Ikeda M."/>
            <person name="Nakagawa S."/>
        </authorList>
    </citation>
    <scope>NUCLEOTIDE SEQUENCE [LARGE SCALE GENOMIC DNA]</scope>
    <source>
        <strain>ATCC 13032 / DSM 20300 / JCM 1318 / BCRC 11384 / CCUG 27702 / LMG 3730 / NBRC 12168 / NCIMB 10025 / NRRL B-2784 / 534</strain>
    </source>
</reference>
<reference key="3">
    <citation type="journal article" date="2003" name="J. Biotechnol.">
        <title>The complete Corynebacterium glutamicum ATCC 13032 genome sequence and its impact on the production of L-aspartate-derived amino acids and vitamins.</title>
        <authorList>
            <person name="Kalinowski J."/>
            <person name="Bathe B."/>
            <person name="Bartels D."/>
            <person name="Bischoff N."/>
            <person name="Bott M."/>
            <person name="Burkovski A."/>
            <person name="Dusch N."/>
            <person name="Eggeling L."/>
            <person name="Eikmanns B.J."/>
            <person name="Gaigalat L."/>
            <person name="Goesmann A."/>
            <person name="Hartmann M."/>
            <person name="Huthmacher K."/>
            <person name="Kraemer R."/>
            <person name="Linke B."/>
            <person name="McHardy A.C."/>
            <person name="Meyer F."/>
            <person name="Moeckel B."/>
            <person name="Pfefferle W."/>
            <person name="Puehler A."/>
            <person name="Rey D.A."/>
            <person name="Rueckert C."/>
            <person name="Rupp O."/>
            <person name="Sahm H."/>
            <person name="Wendisch V.F."/>
            <person name="Wiegraebe I."/>
            <person name="Tauch A."/>
        </authorList>
    </citation>
    <scope>NUCLEOTIDE SEQUENCE [LARGE SCALE GENOMIC DNA]</scope>
    <source>
        <strain>ATCC 13032 / DSM 20300 / JCM 1318 / BCRC 11384 / CCUG 27702 / LMG 3730 / NBRC 12168 / NCIMB 10025 / NRRL B-2784 / 534</strain>
    </source>
</reference>
<evidence type="ECO:0000250" key="1"/>
<evidence type="ECO:0000250" key="2">
    <source>
        <dbReference type="UniProtKB" id="P14618"/>
    </source>
</evidence>
<evidence type="ECO:0000305" key="3"/>
<protein>
    <recommendedName>
        <fullName>Pyruvate kinase</fullName>
        <shortName>PK</shortName>
        <ecNumber>2.7.1.40</ecNumber>
    </recommendedName>
</protein>
<organism>
    <name type="scientific">Corynebacterium glutamicum (strain ATCC 13032 / DSM 20300 / JCM 1318 / BCRC 11384 / CCUG 27702 / LMG 3730 / NBRC 12168 / NCIMB 10025 / NRRL B-2784 / 534)</name>
    <dbReference type="NCBI Taxonomy" id="196627"/>
    <lineage>
        <taxon>Bacteria</taxon>
        <taxon>Bacillati</taxon>
        <taxon>Actinomycetota</taxon>
        <taxon>Actinomycetes</taxon>
        <taxon>Mycobacteriales</taxon>
        <taxon>Corynebacteriaceae</taxon>
        <taxon>Corynebacterium</taxon>
    </lineage>
</organism>
<proteinExistence type="evidence at protein level"/>
<feature type="chain" id="PRO_0000112068" description="Pyruvate kinase">
    <location>
        <begin position="1"/>
        <end position="475"/>
    </location>
</feature>
<feature type="binding site" evidence="1">
    <location>
        <position position="33"/>
    </location>
    <ligand>
        <name>substrate</name>
    </ligand>
</feature>
<feature type="binding site" evidence="2">
    <location>
        <begin position="35"/>
        <end position="38"/>
    </location>
    <ligand>
        <name>ATP</name>
        <dbReference type="ChEBI" id="CHEBI:30616"/>
    </ligand>
</feature>
<feature type="binding site" evidence="1">
    <location>
        <position position="35"/>
    </location>
    <ligand>
        <name>K(+)</name>
        <dbReference type="ChEBI" id="CHEBI:29103"/>
    </ligand>
</feature>
<feature type="binding site" evidence="1">
    <location>
        <position position="37"/>
    </location>
    <ligand>
        <name>K(+)</name>
        <dbReference type="ChEBI" id="CHEBI:29103"/>
    </ligand>
</feature>
<feature type="binding site" evidence="1">
    <location>
        <position position="67"/>
    </location>
    <ligand>
        <name>K(+)</name>
        <dbReference type="ChEBI" id="CHEBI:29103"/>
    </ligand>
</feature>
<feature type="binding site" evidence="2">
    <location>
        <position position="74"/>
    </location>
    <ligand>
        <name>ATP</name>
        <dbReference type="ChEBI" id="CHEBI:30616"/>
    </ligand>
</feature>
<feature type="binding site" evidence="2">
    <location>
        <position position="155"/>
    </location>
    <ligand>
        <name>ATP</name>
        <dbReference type="ChEBI" id="CHEBI:30616"/>
    </ligand>
</feature>
<feature type="binding site" evidence="1">
    <location>
        <position position="220"/>
    </location>
    <ligand>
        <name>Mg(2+)</name>
        <dbReference type="ChEBI" id="CHEBI:18420"/>
    </ligand>
</feature>
<feature type="binding site" evidence="1">
    <location>
        <position position="243"/>
    </location>
    <ligand>
        <name>substrate</name>
    </ligand>
</feature>
<feature type="binding site" evidence="1">
    <location>
        <position position="244"/>
    </location>
    <ligand>
        <name>Mg(2+)</name>
        <dbReference type="ChEBI" id="CHEBI:18420"/>
    </ligand>
</feature>
<feature type="binding site" evidence="1">
    <location>
        <position position="244"/>
    </location>
    <ligand>
        <name>substrate</name>
    </ligand>
</feature>
<feature type="binding site" evidence="1">
    <location>
        <position position="276"/>
    </location>
    <ligand>
        <name>substrate</name>
    </ligand>
</feature>
<feature type="site" description="Transition state stabilizer" evidence="1">
    <location>
        <position position="218"/>
    </location>
</feature>
<comment type="catalytic activity">
    <reaction>
        <text>pyruvate + ATP = phosphoenolpyruvate + ADP + H(+)</text>
        <dbReference type="Rhea" id="RHEA:18157"/>
        <dbReference type="ChEBI" id="CHEBI:15361"/>
        <dbReference type="ChEBI" id="CHEBI:15378"/>
        <dbReference type="ChEBI" id="CHEBI:30616"/>
        <dbReference type="ChEBI" id="CHEBI:58702"/>
        <dbReference type="ChEBI" id="CHEBI:456216"/>
        <dbReference type="EC" id="2.7.1.40"/>
    </reaction>
</comment>
<comment type="cofactor">
    <cofactor>
        <name>Mg(2+)</name>
        <dbReference type="ChEBI" id="CHEBI:18420"/>
    </cofactor>
</comment>
<comment type="cofactor">
    <cofactor>
        <name>K(+)</name>
        <dbReference type="ChEBI" id="CHEBI:29103"/>
    </cofactor>
</comment>
<comment type="pathway">
    <text>Carbohydrate degradation; glycolysis; pyruvate from D-glyceraldehyde 3-phosphate: step 5/5.</text>
</comment>
<comment type="subunit">
    <text>Homotetramer.</text>
</comment>
<comment type="similarity">
    <text evidence="3">Belongs to the pyruvate kinase family.</text>
</comment>
<comment type="sequence caution" evidence="3">
    <conflict type="erroneous initiation">
        <sequence resource="EMBL-CDS" id="CAF20425"/>
    </conflict>
</comment>
<sequence length="475" mass="51471">MDRRTKIVCTLGPAVASADGILRLVEDGMDVARLNFSHGDHPDHEQNYKWVREAAEKTGRAVGILADLQGPKIRLGRFTDGATVWENGETIRITVDDVEGTHDRVSTTYKNLAKDAKPGDRLLVDDGKVGLVCVSVEGNDVICEVVEGGPVSNNKGVSLPGMDISVPALSEKDIRDLRFALKLGVDFIALSFVRSPADAELVHKIMDEEGRRVPVIAKLEKPEAVTSLEPIVLAFDAVMVARGDLGVEVPLEEVPLVQKRAIQIARENAKPVIVATQMLDSMIENSRPTRAEASDVANAVLDGADAVMLSGETSVGKDPHNVVRTMSRIVRFAETDGRVPDLTHIPRTKRGVISYSARDIAERLNARALVAFTTSGDTAKRVARLHSHLPLLVFTPNEAVRSELALTWGATTFLCPPVSDTDDMMREVDRALLAMPEYNKGDMMVVVAGSPPGVTGNTNMIHVHLLGDDTRIAKL</sequence>
<dbReference type="EC" id="2.7.1.40"/>
<dbReference type="EMBL" id="L27126">
    <property type="protein sequence ID" value="AAA56793.1"/>
    <property type="molecule type" value="Genomic_DNA"/>
</dbReference>
<dbReference type="EMBL" id="BA000036">
    <property type="protein sequence ID" value="BAB99482.1"/>
    <property type="molecule type" value="Genomic_DNA"/>
</dbReference>
<dbReference type="EMBL" id="BX927154">
    <property type="protein sequence ID" value="CAF20425.1"/>
    <property type="status" value="ALT_INIT"/>
    <property type="molecule type" value="Genomic_DNA"/>
</dbReference>
<dbReference type="PIR" id="I40840">
    <property type="entry name" value="I40840"/>
</dbReference>
<dbReference type="RefSeq" id="NP_601288.2">
    <property type="nucleotide sequence ID" value="NC_003450.3"/>
</dbReference>
<dbReference type="RefSeq" id="WP_011014873.1">
    <property type="nucleotide sequence ID" value="NC_006958.1"/>
</dbReference>
<dbReference type="SMR" id="Q46078"/>
<dbReference type="STRING" id="196627.cg2291"/>
<dbReference type="GeneID" id="1020040"/>
<dbReference type="KEGG" id="cgb:cg2291"/>
<dbReference type="KEGG" id="cgl:Cgl2089"/>
<dbReference type="PATRIC" id="fig|196627.13.peg.2025"/>
<dbReference type="eggNOG" id="COG0469">
    <property type="taxonomic scope" value="Bacteria"/>
</dbReference>
<dbReference type="HOGENOM" id="CLU_015439_0_2_11"/>
<dbReference type="OrthoDB" id="9812123at2"/>
<dbReference type="BioCyc" id="CORYNE:G18NG-11681-MONOMER"/>
<dbReference type="BRENDA" id="2.7.1.40">
    <property type="organism ID" value="960"/>
</dbReference>
<dbReference type="SABIO-RK" id="Q46078"/>
<dbReference type="UniPathway" id="UPA00109">
    <property type="reaction ID" value="UER00188"/>
</dbReference>
<dbReference type="Proteomes" id="UP000000582">
    <property type="component" value="Chromosome"/>
</dbReference>
<dbReference type="Proteomes" id="UP000001009">
    <property type="component" value="Chromosome"/>
</dbReference>
<dbReference type="GO" id="GO:0005524">
    <property type="term" value="F:ATP binding"/>
    <property type="evidence" value="ECO:0007669"/>
    <property type="project" value="UniProtKB-KW"/>
</dbReference>
<dbReference type="GO" id="GO:0016301">
    <property type="term" value="F:kinase activity"/>
    <property type="evidence" value="ECO:0007669"/>
    <property type="project" value="UniProtKB-KW"/>
</dbReference>
<dbReference type="GO" id="GO:0000287">
    <property type="term" value="F:magnesium ion binding"/>
    <property type="evidence" value="ECO:0007669"/>
    <property type="project" value="InterPro"/>
</dbReference>
<dbReference type="GO" id="GO:0030955">
    <property type="term" value="F:potassium ion binding"/>
    <property type="evidence" value="ECO:0007669"/>
    <property type="project" value="InterPro"/>
</dbReference>
<dbReference type="GO" id="GO:0004743">
    <property type="term" value="F:pyruvate kinase activity"/>
    <property type="evidence" value="ECO:0007669"/>
    <property type="project" value="UniProtKB-EC"/>
</dbReference>
<dbReference type="FunFam" id="2.40.33.10:FF:000001">
    <property type="entry name" value="Pyruvate kinase"/>
    <property type="match status" value="1"/>
</dbReference>
<dbReference type="FunFam" id="3.40.1380.20:FF:000009">
    <property type="entry name" value="Pyruvate kinase"/>
    <property type="match status" value="1"/>
</dbReference>
<dbReference type="Gene3D" id="3.20.20.60">
    <property type="entry name" value="Phosphoenolpyruvate-binding domains"/>
    <property type="match status" value="1"/>
</dbReference>
<dbReference type="Gene3D" id="2.40.33.10">
    <property type="entry name" value="PK beta-barrel domain-like"/>
    <property type="match status" value="1"/>
</dbReference>
<dbReference type="Gene3D" id="3.40.1380.20">
    <property type="entry name" value="Pyruvate kinase, C-terminal domain"/>
    <property type="match status" value="1"/>
</dbReference>
<dbReference type="InterPro" id="IPR001697">
    <property type="entry name" value="Pyr_Knase"/>
</dbReference>
<dbReference type="InterPro" id="IPR015813">
    <property type="entry name" value="Pyrv/PenolPyrv_kinase-like_dom"/>
</dbReference>
<dbReference type="InterPro" id="IPR040442">
    <property type="entry name" value="Pyrv_kinase-like_dom_sf"/>
</dbReference>
<dbReference type="InterPro" id="IPR011037">
    <property type="entry name" value="Pyrv_Knase-like_insert_dom_sf"/>
</dbReference>
<dbReference type="InterPro" id="IPR018209">
    <property type="entry name" value="Pyrv_Knase_AS"/>
</dbReference>
<dbReference type="InterPro" id="IPR015793">
    <property type="entry name" value="Pyrv_Knase_brl"/>
</dbReference>
<dbReference type="InterPro" id="IPR015795">
    <property type="entry name" value="Pyrv_Knase_C"/>
</dbReference>
<dbReference type="InterPro" id="IPR036918">
    <property type="entry name" value="Pyrv_Knase_C_sf"/>
</dbReference>
<dbReference type="InterPro" id="IPR015806">
    <property type="entry name" value="Pyrv_Knase_insert_dom_sf"/>
</dbReference>
<dbReference type="NCBIfam" id="NF004491">
    <property type="entry name" value="PRK05826.1"/>
    <property type="match status" value="1"/>
</dbReference>
<dbReference type="NCBIfam" id="NF004886">
    <property type="entry name" value="PRK06247.1"/>
    <property type="match status" value="1"/>
</dbReference>
<dbReference type="NCBIfam" id="NF004978">
    <property type="entry name" value="PRK06354.1"/>
    <property type="match status" value="1"/>
</dbReference>
<dbReference type="NCBIfam" id="TIGR01064">
    <property type="entry name" value="pyruv_kin"/>
    <property type="match status" value="1"/>
</dbReference>
<dbReference type="PANTHER" id="PTHR11817">
    <property type="entry name" value="PYRUVATE KINASE"/>
    <property type="match status" value="1"/>
</dbReference>
<dbReference type="Pfam" id="PF00224">
    <property type="entry name" value="PK"/>
    <property type="match status" value="1"/>
</dbReference>
<dbReference type="Pfam" id="PF02887">
    <property type="entry name" value="PK_C"/>
    <property type="match status" value="1"/>
</dbReference>
<dbReference type="PRINTS" id="PR01050">
    <property type="entry name" value="PYRUVTKNASE"/>
</dbReference>
<dbReference type="SUPFAM" id="SSF51621">
    <property type="entry name" value="Phosphoenolpyruvate/pyruvate domain"/>
    <property type="match status" value="1"/>
</dbReference>
<dbReference type="SUPFAM" id="SSF50800">
    <property type="entry name" value="PK beta-barrel domain-like"/>
    <property type="match status" value="1"/>
</dbReference>
<dbReference type="SUPFAM" id="SSF52935">
    <property type="entry name" value="PK C-terminal domain-like"/>
    <property type="match status" value="1"/>
</dbReference>
<dbReference type="PROSITE" id="PS00110">
    <property type="entry name" value="PYRUVATE_KINASE"/>
    <property type="match status" value="1"/>
</dbReference>
<accession>Q46078</accession>
<keyword id="KW-0067">ATP-binding</keyword>
<keyword id="KW-0324">Glycolysis</keyword>
<keyword id="KW-0418">Kinase</keyword>
<keyword id="KW-0460">Magnesium</keyword>
<keyword id="KW-0479">Metal-binding</keyword>
<keyword id="KW-0547">Nucleotide-binding</keyword>
<keyword id="KW-0630">Potassium</keyword>
<keyword id="KW-0670">Pyruvate</keyword>
<keyword id="KW-1185">Reference proteome</keyword>
<keyword id="KW-0808">Transferase</keyword>